<accession>Q96520</accession>
<accession>Q43734</accession>
<reference key="1">
    <citation type="online journal article" date="1996" name="Plant Gene Register">
        <title>Eleven cDNA clones from Arabidopsis thaliana encoding isoperoxidases.</title>
        <authorList>
            <person name="Capelli N."/>
            <person name="Tognolli M."/>
            <person name="Flach J."/>
            <person name="Overney S."/>
            <person name="Penel C."/>
            <person name="Greppin H."/>
            <person name="Simon P."/>
        </authorList>
        <locator>PGR96-066</locator>
    </citation>
    <scope>NUCLEOTIDE SEQUENCE [MRNA]</scope>
    <source>
        <strain>cv. Columbia</strain>
    </source>
</reference>
<reference key="2">
    <citation type="submission" date="1996-06" db="EMBL/GenBank/DDBJ databases">
        <title>From expressed sequence tags to structure, function, evolution and expression of 28 ER-targeted Arabidopsis peroxidases.</title>
        <authorList>
            <person name="Welinder K.G."/>
            <person name="Jespersen H.M."/>
            <person name="Kjaersgaard I.V.H."/>
            <person name="Justesen A.F."/>
            <person name="Oestergaard L."/>
            <person name="Abelskov A.K."/>
            <person name="Jensen R.B."/>
            <person name="Hansen L.N."/>
            <person name="Rasmussen S.K."/>
        </authorList>
    </citation>
    <scope>NUCLEOTIDE SEQUENCE [MRNA]</scope>
    <source>
        <strain>cv. Columbia</strain>
    </source>
</reference>
<reference key="3">
    <citation type="journal article" date="2000" name="Nature">
        <title>Sequence and analysis of chromosome 1 of the plant Arabidopsis thaliana.</title>
        <authorList>
            <person name="Theologis A."/>
            <person name="Ecker J.R."/>
            <person name="Palm C.J."/>
            <person name="Federspiel N.A."/>
            <person name="Kaul S."/>
            <person name="White O."/>
            <person name="Alonso J."/>
            <person name="Altafi H."/>
            <person name="Araujo R."/>
            <person name="Bowman C.L."/>
            <person name="Brooks S.Y."/>
            <person name="Buehler E."/>
            <person name="Chan A."/>
            <person name="Chao Q."/>
            <person name="Chen H."/>
            <person name="Cheuk R.F."/>
            <person name="Chin C.W."/>
            <person name="Chung M.K."/>
            <person name="Conn L."/>
            <person name="Conway A.B."/>
            <person name="Conway A.R."/>
            <person name="Creasy T.H."/>
            <person name="Dewar K."/>
            <person name="Dunn P."/>
            <person name="Etgu P."/>
            <person name="Feldblyum T.V."/>
            <person name="Feng J.-D."/>
            <person name="Fong B."/>
            <person name="Fujii C.Y."/>
            <person name="Gill J.E."/>
            <person name="Goldsmith A.D."/>
            <person name="Haas B."/>
            <person name="Hansen N.F."/>
            <person name="Hughes B."/>
            <person name="Huizar L."/>
            <person name="Hunter J.L."/>
            <person name="Jenkins J."/>
            <person name="Johnson-Hopson C."/>
            <person name="Khan S."/>
            <person name="Khaykin E."/>
            <person name="Kim C.J."/>
            <person name="Koo H.L."/>
            <person name="Kremenetskaia I."/>
            <person name="Kurtz D.B."/>
            <person name="Kwan A."/>
            <person name="Lam B."/>
            <person name="Langin-Hooper S."/>
            <person name="Lee A."/>
            <person name="Lee J.M."/>
            <person name="Lenz C.A."/>
            <person name="Li J.H."/>
            <person name="Li Y.-P."/>
            <person name="Lin X."/>
            <person name="Liu S.X."/>
            <person name="Liu Z.A."/>
            <person name="Luros J.S."/>
            <person name="Maiti R."/>
            <person name="Marziali A."/>
            <person name="Militscher J."/>
            <person name="Miranda M."/>
            <person name="Nguyen M."/>
            <person name="Nierman W.C."/>
            <person name="Osborne B.I."/>
            <person name="Pai G."/>
            <person name="Peterson J."/>
            <person name="Pham P.K."/>
            <person name="Rizzo M."/>
            <person name="Rooney T."/>
            <person name="Rowley D."/>
            <person name="Sakano H."/>
            <person name="Salzberg S.L."/>
            <person name="Schwartz J.R."/>
            <person name="Shinn P."/>
            <person name="Southwick A.M."/>
            <person name="Sun H."/>
            <person name="Tallon L.J."/>
            <person name="Tambunga G."/>
            <person name="Toriumi M.J."/>
            <person name="Town C.D."/>
            <person name="Utterback T."/>
            <person name="Van Aken S."/>
            <person name="Vaysberg M."/>
            <person name="Vysotskaia V.S."/>
            <person name="Walker M."/>
            <person name="Wu D."/>
            <person name="Yu G."/>
            <person name="Fraser C.M."/>
            <person name="Venter J.C."/>
            <person name="Davis R.W."/>
        </authorList>
    </citation>
    <scope>NUCLEOTIDE SEQUENCE [LARGE SCALE GENOMIC DNA]</scope>
    <source>
        <strain>cv. Columbia</strain>
    </source>
</reference>
<reference key="4">
    <citation type="journal article" date="2017" name="Plant J.">
        <title>Araport11: a complete reannotation of the Arabidopsis thaliana reference genome.</title>
        <authorList>
            <person name="Cheng C.Y."/>
            <person name="Krishnakumar V."/>
            <person name="Chan A.P."/>
            <person name="Thibaud-Nissen F."/>
            <person name="Schobel S."/>
            <person name="Town C.D."/>
        </authorList>
    </citation>
    <scope>GENOME REANNOTATION</scope>
    <source>
        <strain>cv. Columbia</strain>
    </source>
</reference>
<reference key="5">
    <citation type="journal article" date="2003" name="Science">
        <title>Empirical analysis of transcriptional activity in the Arabidopsis genome.</title>
        <authorList>
            <person name="Yamada K."/>
            <person name="Lim J."/>
            <person name="Dale J.M."/>
            <person name="Chen H."/>
            <person name="Shinn P."/>
            <person name="Palm C.J."/>
            <person name="Southwick A.M."/>
            <person name="Wu H.C."/>
            <person name="Kim C.J."/>
            <person name="Nguyen M."/>
            <person name="Pham P.K."/>
            <person name="Cheuk R.F."/>
            <person name="Karlin-Newmann G."/>
            <person name="Liu S.X."/>
            <person name="Lam B."/>
            <person name="Sakano H."/>
            <person name="Wu T."/>
            <person name="Yu G."/>
            <person name="Miranda M."/>
            <person name="Quach H.L."/>
            <person name="Tripp M."/>
            <person name="Chang C.H."/>
            <person name="Lee J.M."/>
            <person name="Toriumi M.J."/>
            <person name="Chan M.M."/>
            <person name="Tang C.C."/>
            <person name="Onodera C.S."/>
            <person name="Deng J.M."/>
            <person name="Akiyama K."/>
            <person name="Ansari Y."/>
            <person name="Arakawa T."/>
            <person name="Banh J."/>
            <person name="Banno F."/>
            <person name="Bowser L."/>
            <person name="Brooks S.Y."/>
            <person name="Carninci P."/>
            <person name="Chao Q."/>
            <person name="Choy N."/>
            <person name="Enju A."/>
            <person name="Goldsmith A.D."/>
            <person name="Gurjal M."/>
            <person name="Hansen N.F."/>
            <person name="Hayashizaki Y."/>
            <person name="Johnson-Hopson C."/>
            <person name="Hsuan V.W."/>
            <person name="Iida K."/>
            <person name="Karnes M."/>
            <person name="Khan S."/>
            <person name="Koesema E."/>
            <person name="Ishida J."/>
            <person name="Jiang P.X."/>
            <person name="Jones T."/>
            <person name="Kawai J."/>
            <person name="Kamiya A."/>
            <person name="Meyers C."/>
            <person name="Nakajima M."/>
            <person name="Narusaka M."/>
            <person name="Seki M."/>
            <person name="Sakurai T."/>
            <person name="Satou M."/>
            <person name="Tamse R."/>
            <person name="Vaysberg M."/>
            <person name="Wallender E.K."/>
            <person name="Wong C."/>
            <person name="Yamamura Y."/>
            <person name="Yuan S."/>
            <person name="Shinozaki K."/>
            <person name="Davis R.W."/>
            <person name="Theologis A."/>
            <person name="Ecker J.R."/>
        </authorList>
    </citation>
    <scope>NUCLEOTIDE SEQUENCE [LARGE SCALE MRNA]</scope>
    <source>
        <strain>cv. Columbia</strain>
    </source>
</reference>
<reference key="6">
    <citation type="submission" date="2002-03" db="EMBL/GenBank/DDBJ databases">
        <title>Full-length cDNA from Arabidopsis thaliana.</title>
        <authorList>
            <person name="Brover V.V."/>
            <person name="Troukhan M.E."/>
            <person name="Alexandrov N.A."/>
            <person name="Lu Y.-P."/>
            <person name="Flavell R.B."/>
            <person name="Feldmann K.A."/>
        </authorList>
    </citation>
    <scope>NUCLEOTIDE SEQUENCE [LARGE SCALE MRNA]</scope>
</reference>
<reference key="7">
    <citation type="journal article" date="1998" name="FEBS Lett.">
        <title>Computational analyses and annotations of the Arabidopsis peroxidase gene family.</title>
        <authorList>
            <person name="Oestergaard L."/>
            <person name="Pedersen A.G."/>
            <person name="Jespersen H.M."/>
            <person name="Brunak S."/>
            <person name="Welinder K.G."/>
        </authorList>
    </citation>
    <scope>CHARACTERIZATION</scope>
    <source>
        <strain>cv. Columbia</strain>
    </source>
</reference>
<reference key="8">
    <citation type="journal article" date="2000" name="Plant Physiol.">
        <title>Microarray analysis of developing Arabidopsis seeds.</title>
        <authorList>
            <person name="Girke T."/>
            <person name="Todd J."/>
            <person name="Ruuska S."/>
            <person name="White J."/>
            <person name="Benning C."/>
            <person name="Ohlrogge J."/>
        </authorList>
    </citation>
    <scope>DEVELOPMENTAL STAGE</scope>
    <source>
        <strain>cv. Columbia</strain>
    </source>
</reference>
<reference key="9">
    <citation type="journal article" date="2002" name="J. Plant Physiol.">
        <title>Identification and characterization of Ca(2+)-pectate binding peroxidases in Arabidopsis thaliana.</title>
        <authorList>
            <person name="Dunand C."/>
            <person name="Tognolli M."/>
            <person name="Overney S."/>
            <person name="von Tobel L."/>
            <person name="de Meyer M."/>
            <person name="Simon P."/>
            <person name="Penel C."/>
        </authorList>
    </citation>
    <scope>CHARACTERIZATION</scope>
    <source>
        <strain>cv. Columbia</strain>
    </source>
</reference>
<reference key="10">
    <citation type="journal article" date="2000" name="Proc. Natl. Acad. Sci. U.S.A.">
        <title>Coordinated plant defense responses in Arabidopsis revealed by microarray analysis.</title>
        <authorList>
            <person name="Schenk P.M."/>
            <person name="Kazan K."/>
            <person name="Wilson I."/>
            <person name="Anderson J.P."/>
            <person name="Richmond T."/>
            <person name="Somerville S.C."/>
            <person name="Manners J.M."/>
        </authorList>
    </citation>
    <scope>INDUCTION</scope>
    <source>
        <strain>cv. Columbia</strain>
    </source>
</reference>
<reference key="11">
    <citation type="journal article" date="2002" name="Gene">
        <title>Analysis and expression of the class III peroxidase large gene family in Arabidopsis thaliana.</title>
        <authorList>
            <person name="Tognolli M."/>
            <person name="Penel C."/>
            <person name="Greppin H."/>
            <person name="Simon P."/>
        </authorList>
    </citation>
    <scope>GENE FAMILY ORGANIZATION</scope>
    <scope>NOMENCLATURE</scope>
    <source>
        <strain>cv. Columbia</strain>
    </source>
</reference>
<evidence type="ECO:0000255" key="1"/>
<evidence type="ECO:0000255" key="2">
    <source>
        <dbReference type="PROSITE-ProRule" id="PRU00297"/>
    </source>
</evidence>
<evidence type="ECO:0000255" key="3">
    <source>
        <dbReference type="PROSITE-ProRule" id="PRU10012"/>
    </source>
</evidence>
<evidence type="ECO:0000269" key="4">
    <source>
    </source>
</evidence>
<evidence type="ECO:0000269" key="5">
    <source>
    </source>
</evidence>
<evidence type="ECO:0000305" key="6"/>
<proteinExistence type="evidence at protein level"/>
<name>PER12_ARATH</name>
<keyword id="KW-0106">Calcium</keyword>
<keyword id="KW-1015">Disulfide bond</keyword>
<keyword id="KW-0325">Glycoprotein</keyword>
<keyword id="KW-0349">Heme</keyword>
<keyword id="KW-0376">Hydrogen peroxide</keyword>
<keyword id="KW-0408">Iron</keyword>
<keyword id="KW-0479">Metal-binding</keyword>
<keyword id="KW-0560">Oxidoreductase</keyword>
<keyword id="KW-0575">Peroxidase</keyword>
<keyword id="KW-1185">Reference proteome</keyword>
<keyword id="KW-0964">Secreted</keyword>
<keyword id="KW-0732">Signal</keyword>
<keyword id="KW-0926">Vacuole</keyword>
<organism>
    <name type="scientific">Arabidopsis thaliana</name>
    <name type="common">Mouse-ear cress</name>
    <dbReference type="NCBI Taxonomy" id="3702"/>
    <lineage>
        <taxon>Eukaryota</taxon>
        <taxon>Viridiplantae</taxon>
        <taxon>Streptophyta</taxon>
        <taxon>Embryophyta</taxon>
        <taxon>Tracheophyta</taxon>
        <taxon>Spermatophyta</taxon>
        <taxon>Magnoliopsida</taxon>
        <taxon>eudicotyledons</taxon>
        <taxon>Gunneridae</taxon>
        <taxon>Pentapetalae</taxon>
        <taxon>rosids</taxon>
        <taxon>malvids</taxon>
        <taxon>Brassicales</taxon>
        <taxon>Brassicaceae</taxon>
        <taxon>Camelineae</taxon>
        <taxon>Arabidopsis</taxon>
    </lineage>
</organism>
<sequence length="358" mass="39559">MTKAYSTRVLTFLILISLMAVTLNLFPTVEAKKRSRDAPIVKGLSWNFYQKACPKVENIIRKELKKVFKRDIGLAAAILRIHFHDCFVQGCEASVLLAGSASGPGEQSSIPNLTLRQQAFVVINNLRALVQKKCGQVVSCSDILALAARDSVVLSGGPDYAVPLGRRDSLAFASQETTLNNLPPPFFNASQLIADFANRNLNITDLVALSGGHTIGIAHCPSFTDRLYPNQDPTMNQFFANSLKRTCPTANSSNTQVNDIRSPDVFDNKYYVDLMNRQGLFTSDQDLFVDKRTRGIVESFAIDQQLFFDYFTVAMIKMGQMSVLTGTQGEIRSNCSARNTQSFMSVLEEGIEEAISMI</sequence>
<gene>
    <name type="primary">PER12</name>
    <name type="synonym">P12</name>
    <name type="ordered locus">At1g71695</name>
    <name type="ORF">F14O23.6</name>
    <name type="ORF">F26A9.5</name>
</gene>
<protein>
    <recommendedName>
        <fullName>Peroxidase 12</fullName>
        <shortName>Atperox P12</shortName>
        <ecNumber>1.11.1.7</ecNumber>
    </recommendedName>
    <alternativeName>
        <fullName>ATP4a</fullName>
    </alternativeName>
    <alternativeName>
        <fullName>PRXR6</fullName>
    </alternativeName>
</protein>
<feature type="signal peptide" evidence="1">
    <location>
        <begin position="1"/>
        <end position="31"/>
    </location>
</feature>
<feature type="chain" id="PRO_0000023678" description="Peroxidase 12">
    <location>
        <begin position="32"/>
        <end position="358"/>
    </location>
</feature>
<feature type="active site" description="Proton acceptor" evidence="2 3">
    <location>
        <position position="84"/>
    </location>
</feature>
<feature type="binding site" evidence="2">
    <location>
        <position position="85"/>
    </location>
    <ligand>
        <name>Ca(2+)</name>
        <dbReference type="ChEBI" id="CHEBI:29108"/>
        <label>1</label>
    </ligand>
</feature>
<feature type="binding site" evidence="2">
    <location>
        <position position="88"/>
    </location>
    <ligand>
        <name>Ca(2+)</name>
        <dbReference type="ChEBI" id="CHEBI:29108"/>
        <label>1</label>
    </ligand>
</feature>
<feature type="binding site" evidence="2">
    <location>
        <position position="90"/>
    </location>
    <ligand>
        <name>Ca(2+)</name>
        <dbReference type="ChEBI" id="CHEBI:29108"/>
        <label>1</label>
    </ligand>
</feature>
<feature type="binding site" evidence="2">
    <location>
        <position position="92"/>
    </location>
    <ligand>
        <name>Ca(2+)</name>
        <dbReference type="ChEBI" id="CHEBI:29108"/>
        <label>1</label>
    </ligand>
</feature>
<feature type="binding site" evidence="2">
    <location>
        <position position="94"/>
    </location>
    <ligand>
        <name>Ca(2+)</name>
        <dbReference type="ChEBI" id="CHEBI:29108"/>
        <label>1</label>
    </ligand>
</feature>
<feature type="binding site" evidence="2">
    <location>
        <position position="183"/>
    </location>
    <ligand>
        <name>substrate</name>
    </ligand>
</feature>
<feature type="binding site" description="axial binding residue" evidence="2">
    <location>
        <position position="213"/>
    </location>
    <ligand>
        <name>heme b</name>
        <dbReference type="ChEBI" id="CHEBI:60344"/>
    </ligand>
    <ligandPart>
        <name>Fe</name>
        <dbReference type="ChEBI" id="CHEBI:18248"/>
    </ligandPart>
</feature>
<feature type="binding site" evidence="2">
    <location>
        <position position="214"/>
    </location>
    <ligand>
        <name>Ca(2+)</name>
        <dbReference type="ChEBI" id="CHEBI:29108"/>
        <label>2</label>
    </ligand>
</feature>
<feature type="binding site" evidence="2">
    <location>
        <position position="259"/>
    </location>
    <ligand>
        <name>Ca(2+)</name>
        <dbReference type="ChEBI" id="CHEBI:29108"/>
        <label>2</label>
    </ligand>
</feature>
<feature type="binding site" evidence="2">
    <location>
        <position position="262"/>
    </location>
    <ligand>
        <name>Ca(2+)</name>
        <dbReference type="ChEBI" id="CHEBI:29108"/>
        <label>2</label>
    </ligand>
</feature>
<feature type="binding site" evidence="2">
    <location>
        <position position="267"/>
    </location>
    <ligand>
        <name>Ca(2+)</name>
        <dbReference type="ChEBI" id="CHEBI:29108"/>
        <label>2</label>
    </ligand>
</feature>
<feature type="site" description="Transition state stabilizer" evidence="2">
    <location>
        <position position="80"/>
    </location>
</feature>
<feature type="glycosylation site" description="N-linked (GlcNAc...) asparagine" evidence="1">
    <location>
        <position position="188"/>
    </location>
</feature>
<feature type="glycosylation site" description="N-linked (GlcNAc...) asparagine" evidence="1">
    <location>
        <position position="202"/>
    </location>
</feature>
<feature type="glycosylation site" description="N-linked (GlcNAc...) asparagine" evidence="1">
    <location>
        <position position="251"/>
    </location>
</feature>
<feature type="glycosylation site" description="N-linked (GlcNAc...) asparagine" evidence="1">
    <location>
        <position position="334"/>
    </location>
</feature>
<feature type="disulfide bond" evidence="2">
    <location>
        <begin position="53"/>
        <end position="134"/>
    </location>
</feature>
<feature type="disulfide bond" evidence="2">
    <location>
        <begin position="86"/>
        <end position="91"/>
    </location>
</feature>
<feature type="disulfide bond" evidence="2">
    <location>
        <begin position="140"/>
        <end position="335"/>
    </location>
</feature>
<feature type="disulfide bond" evidence="2">
    <location>
        <begin position="220"/>
        <end position="247"/>
    </location>
</feature>
<feature type="sequence conflict" description="In Ref. 1; CAA66962." evidence="6" ref="1">
    <original>V</original>
    <variation>G</variation>
    <location>
        <position position="257"/>
    </location>
</feature>
<dbReference type="EC" id="1.11.1.7"/>
<dbReference type="EMBL" id="X98318">
    <property type="protein sequence ID" value="CAA66962.1"/>
    <property type="molecule type" value="mRNA"/>
</dbReference>
<dbReference type="EMBL" id="X98773">
    <property type="protein sequence ID" value="CAA67309.1"/>
    <property type="molecule type" value="mRNA"/>
</dbReference>
<dbReference type="EMBL" id="AC012654">
    <property type="protein sequence ID" value="AAF43221.1"/>
    <property type="molecule type" value="Genomic_DNA"/>
</dbReference>
<dbReference type="EMBL" id="AC016163">
    <property type="protein sequence ID" value="AAG51834.1"/>
    <property type="molecule type" value="Genomic_DNA"/>
</dbReference>
<dbReference type="EMBL" id="CP002684">
    <property type="protein sequence ID" value="AEE35217.1"/>
    <property type="molecule type" value="Genomic_DNA"/>
</dbReference>
<dbReference type="EMBL" id="AF334732">
    <property type="protein sequence ID" value="AAG50110.1"/>
    <property type="molecule type" value="mRNA"/>
</dbReference>
<dbReference type="EMBL" id="BT000715">
    <property type="protein sequence ID" value="AAN31858.1"/>
    <property type="molecule type" value="mRNA"/>
</dbReference>
<dbReference type="EMBL" id="AY087964">
    <property type="protein sequence ID" value="AAM65511.1"/>
    <property type="molecule type" value="mRNA"/>
</dbReference>
<dbReference type="PIR" id="A96739">
    <property type="entry name" value="A96739"/>
</dbReference>
<dbReference type="RefSeq" id="NP_177313.1">
    <property type="nucleotide sequence ID" value="NM_105826.4"/>
</dbReference>
<dbReference type="SMR" id="Q96520"/>
<dbReference type="FunCoup" id="Q96520">
    <property type="interactions" value="1115"/>
</dbReference>
<dbReference type="STRING" id="3702.Q96520"/>
<dbReference type="PeroxiBase" id="93">
    <property type="entry name" value="AtPrx12"/>
</dbReference>
<dbReference type="GlyCosmos" id="Q96520">
    <property type="glycosylation" value="4 sites, No reported glycans"/>
</dbReference>
<dbReference type="GlyGen" id="Q96520">
    <property type="glycosylation" value="4 sites"/>
</dbReference>
<dbReference type="PaxDb" id="3702-AT1G71695.1"/>
<dbReference type="ProteomicsDB" id="236412"/>
<dbReference type="EnsemblPlants" id="AT1G71695.1">
    <property type="protein sequence ID" value="AT1G71695.1"/>
    <property type="gene ID" value="AT1G71695"/>
</dbReference>
<dbReference type="GeneID" id="843498"/>
<dbReference type="Gramene" id="AT1G71695.1">
    <property type="protein sequence ID" value="AT1G71695.1"/>
    <property type="gene ID" value="AT1G71695"/>
</dbReference>
<dbReference type="KEGG" id="ath:AT1G71695"/>
<dbReference type="Araport" id="AT1G71695"/>
<dbReference type="TAIR" id="AT1G71695"/>
<dbReference type="eggNOG" id="ENOG502QT8W">
    <property type="taxonomic scope" value="Eukaryota"/>
</dbReference>
<dbReference type="HOGENOM" id="CLU_010543_0_1_1"/>
<dbReference type="InParanoid" id="Q96520"/>
<dbReference type="OMA" id="CSARNTQ"/>
<dbReference type="PhylomeDB" id="Q96520"/>
<dbReference type="BioCyc" id="ARA:AT1G71695-MONOMER"/>
<dbReference type="CD-CODE" id="4299E36E">
    <property type="entry name" value="Nucleolus"/>
</dbReference>
<dbReference type="PRO" id="PR:Q96520"/>
<dbReference type="Proteomes" id="UP000006548">
    <property type="component" value="Chromosome 1"/>
</dbReference>
<dbReference type="ExpressionAtlas" id="Q96520">
    <property type="expression patterns" value="baseline and differential"/>
</dbReference>
<dbReference type="GO" id="GO:0005576">
    <property type="term" value="C:extracellular region"/>
    <property type="evidence" value="ECO:0007669"/>
    <property type="project" value="UniProtKB-SubCell"/>
</dbReference>
<dbReference type="GO" id="GO:0005739">
    <property type="term" value="C:mitochondrion"/>
    <property type="evidence" value="ECO:0007005"/>
    <property type="project" value="TAIR"/>
</dbReference>
<dbReference type="GO" id="GO:0009505">
    <property type="term" value="C:plant-type cell wall"/>
    <property type="evidence" value="ECO:0007005"/>
    <property type="project" value="TAIR"/>
</dbReference>
<dbReference type="GO" id="GO:0000325">
    <property type="term" value="C:plant-type vacuole"/>
    <property type="evidence" value="ECO:0007005"/>
    <property type="project" value="TAIR"/>
</dbReference>
<dbReference type="GO" id="GO:0009506">
    <property type="term" value="C:plasmodesma"/>
    <property type="evidence" value="ECO:0007005"/>
    <property type="project" value="TAIR"/>
</dbReference>
<dbReference type="GO" id="GO:0020037">
    <property type="term" value="F:heme binding"/>
    <property type="evidence" value="ECO:0007669"/>
    <property type="project" value="InterPro"/>
</dbReference>
<dbReference type="GO" id="GO:0140825">
    <property type="term" value="F:lactoperoxidase activity"/>
    <property type="evidence" value="ECO:0007669"/>
    <property type="project" value="UniProtKB-EC"/>
</dbReference>
<dbReference type="GO" id="GO:0046872">
    <property type="term" value="F:metal ion binding"/>
    <property type="evidence" value="ECO:0007669"/>
    <property type="project" value="UniProtKB-KW"/>
</dbReference>
<dbReference type="GO" id="GO:0042744">
    <property type="term" value="P:hydrogen peroxide catabolic process"/>
    <property type="evidence" value="ECO:0007669"/>
    <property type="project" value="UniProtKB-KW"/>
</dbReference>
<dbReference type="GO" id="GO:0006979">
    <property type="term" value="P:response to oxidative stress"/>
    <property type="evidence" value="ECO:0007669"/>
    <property type="project" value="InterPro"/>
</dbReference>
<dbReference type="CDD" id="cd00693">
    <property type="entry name" value="secretory_peroxidase"/>
    <property type="match status" value="1"/>
</dbReference>
<dbReference type="FunFam" id="1.10.420.10:FF:000006">
    <property type="entry name" value="Peroxidase"/>
    <property type="match status" value="1"/>
</dbReference>
<dbReference type="FunFam" id="1.10.520.10:FF:000009">
    <property type="entry name" value="Peroxidase"/>
    <property type="match status" value="1"/>
</dbReference>
<dbReference type="Gene3D" id="1.10.520.10">
    <property type="match status" value="1"/>
</dbReference>
<dbReference type="Gene3D" id="1.10.420.10">
    <property type="entry name" value="Peroxidase, domain 2"/>
    <property type="match status" value="1"/>
</dbReference>
<dbReference type="InterPro" id="IPR002016">
    <property type="entry name" value="Haem_peroxidase"/>
</dbReference>
<dbReference type="InterPro" id="IPR010255">
    <property type="entry name" value="Haem_peroxidase_sf"/>
</dbReference>
<dbReference type="InterPro" id="IPR000823">
    <property type="entry name" value="Peroxidase_pln"/>
</dbReference>
<dbReference type="InterPro" id="IPR019794">
    <property type="entry name" value="Peroxidases_AS"/>
</dbReference>
<dbReference type="InterPro" id="IPR019793">
    <property type="entry name" value="Peroxidases_heam-ligand_BS"/>
</dbReference>
<dbReference type="InterPro" id="IPR033905">
    <property type="entry name" value="Secretory_peroxidase"/>
</dbReference>
<dbReference type="PANTHER" id="PTHR31517">
    <property type="match status" value="1"/>
</dbReference>
<dbReference type="PANTHER" id="PTHR31517:SF48">
    <property type="entry name" value="PEROXIDASE 16-RELATED"/>
    <property type="match status" value="1"/>
</dbReference>
<dbReference type="Pfam" id="PF00141">
    <property type="entry name" value="peroxidase"/>
    <property type="match status" value="1"/>
</dbReference>
<dbReference type="PRINTS" id="PR00458">
    <property type="entry name" value="PEROXIDASE"/>
</dbReference>
<dbReference type="PRINTS" id="PR00461">
    <property type="entry name" value="PLPEROXIDASE"/>
</dbReference>
<dbReference type="SUPFAM" id="SSF48113">
    <property type="entry name" value="Heme-dependent peroxidases"/>
    <property type="match status" value="1"/>
</dbReference>
<dbReference type="PROSITE" id="PS00435">
    <property type="entry name" value="PEROXIDASE_1"/>
    <property type="match status" value="1"/>
</dbReference>
<dbReference type="PROSITE" id="PS00436">
    <property type="entry name" value="PEROXIDASE_2"/>
    <property type="match status" value="1"/>
</dbReference>
<dbReference type="PROSITE" id="PS50873">
    <property type="entry name" value="PEROXIDASE_4"/>
    <property type="match status" value="1"/>
</dbReference>
<comment type="function">
    <text>Removal of H(2)O(2), oxidation of toxic reductants, biosynthesis and degradation of lignin, suberization, auxin catabolism, response to environmental stresses such as wounding, pathogen attack and oxidative stress. These functions might be dependent on each isozyme/isoform in each plant tissue.</text>
</comment>
<comment type="function">
    <text>Exhibits a Ca(2+)-pectate binding affinity which could be interpreted in vivo as a specificity to interact with the pectic structure of the cell wall.</text>
</comment>
<comment type="catalytic activity">
    <reaction>
        <text>2 a phenolic donor + H2O2 = 2 a phenolic radical donor + 2 H2O</text>
        <dbReference type="Rhea" id="RHEA:56136"/>
        <dbReference type="ChEBI" id="CHEBI:15377"/>
        <dbReference type="ChEBI" id="CHEBI:16240"/>
        <dbReference type="ChEBI" id="CHEBI:139520"/>
        <dbReference type="ChEBI" id="CHEBI:139521"/>
        <dbReference type="EC" id="1.11.1.7"/>
    </reaction>
</comment>
<comment type="cofactor">
    <cofactor evidence="2">
        <name>heme b</name>
        <dbReference type="ChEBI" id="CHEBI:60344"/>
    </cofactor>
    <text evidence="2">Binds 1 heme b (iron(II)-protoporphyrin IX) group per subunit.</text>
</comment>
<comment type="cofactor">
    <cofactor evidence="2">
        <name>Ca(2+)</name>
        <dbReference type="ChEBI" id="CHEBI:29108"/>
    </cofactor>
    <text evidence="2">Binds 2 calcium ions per subunit.</text>
</comment>
<comment type="subcellular location">
    <subcellularLocation>
        <location evidence="6">Secreted</location>
    </subcellularLocation>
    <subcellularLocation>
        <location evidence="6">Vacuole</location>
    </subcellularLocation>
    <text>Carboxy-terminal extension appears to target the protein to vacuoles.</text>
</comment>
<comment type="tissue specificity">
    <text>Expressed in roots and leaves.</text>
</comment>
<comment type="developmental stage">
    <text evidence="5">Expressed in the first stage of developing seeds.</text>
</comment>
<comment type="induction">
    <text evidence="4">Induced either by incompatible fungal pathogen attack, or by methyl jasmonate, a plant defense-related signaling molecule.</text>
</comment>
<comment type="miscellaneous">
    <text>There are 73 peroxidase genes in A.thaliana.</text>
</comment>
<comment type="similarity">
    <text evidence="2">Belongs to the peroxidase family. Classical plant (class III) peroxidase subfamily.</text>
</comment>